<keyword id="KW-1185">Reference proteome</keyword>
<keyword id="KW-0687">Ribonucleoprotein</keyword>
<keyword id="KW-0689">Ribosomal protein</keyword>
<keyword id="KW-0694">RNA-binding</keyword>
<keyword id="KW-0699">rRNA-binding</keyword>
<protein>
    <recommendedName>
        <fullName evidence="1">Small ribosomal subunit protein uS17</fullName>
    </recommendedName>
    <alternativeName>
        <fullName evidence="2">30S ribosomal protein S17</fullName>
    </alternativeName>
</protein>
<feature type="chain" id="PRO_0000255666" description="Small ribosomal subunit protein uS17">
    <location>
        <begin position="1"/>
        <end position="89"/>
    </location>
</feature>
<name>RS17_BAUCH</name>
<accession>Q1LTC9</accession>
<organism>
    <name type="scientific">Baumannia cicadellinicola subsp. Homalodisca coagulata</name>
    <dbReference type="NCBI Taxonomy" id="374463"/>
    <lineage>
        <taxon>Bacteria</taxon>
        <taxon>Pseudomonadati</taxon>
        <taxon>Pseudomonadota</taxon>
        <taxon>Gammaproteobacteria</taxon>
        <taxon>Candidatus Palibaumannia</taxon>
    </lineage>
</organism>
<evidence type="ECO:0000255" key="1">
    <source>
        <dbReference type="HAMAP-Rule" id="MF_01345"/>
    </source>
</evidence>
<evidence type="ECO:0000305" key="2"/>
<sequence>MYNVDIKKNIRIKQGRVVSNKMDKSIVVAIERIIKHPIYGKYIKRTTKIHAHDENNACNIGDLIEIKECRPISKTKSWILIRIIEKAIC</sequence>
<proteinExistence type="inferred from homology"/>
<comment type="function">
    <text evidence="1">One of the primary rRNA binding proteins, it binds specifically to the 5'-end of 16S ribosomal RNA.</text>
</comment>
<comment type="subunit">
    <text evidence="1">Part of the 30S ribosomal subunit.</text>
</comment>
<comment type="similarity">
    <text evidence="1">Belongs to the universal ribosomal protein uS17 family.</text>
</comment>
<gene>
    <name evidence="1" type="primary">rpsQ</name>
    <name type="ordered locus">BCI_0337</name>
</gene>
<dbReference type="EMBL" id="CP000238">
    <property type="protein sequence ID" value="ABF14067.1"/>
    <property type="molecule type" value="Genomic_DNA"/>
</dbReference>
<dbReference type="SMR" id="Q1LTC9"/>
<dbReference type="STRING" id="374463.BCI_0337"/>
<dbReference type="KEGG" id="bci:BCI_0337"/>
<dbReference type="HOGENOM" id="CLU_073626_1_1_6"/>
<dbReference type="Proteomes" id="UP000002427">
    <property type="component" value="Chromosome"/>
</dbReference>
<dbReference type="GO" id="GO:0022627">
    <property type="term" value="C:cytosolic small ribosomal subunit"/>
    <property type="evidence" value="ECO:0007669"/>
    <property type="project" value="TreeGrafter"/>
</dbReference>
<dbReference type="GO" id="GO:0019843">
    <property type="term" value="F:rRNA binding"/>
    <property type="evidence" value="ECO:0007669"/>
    <property type="project" value="UniProtKB-UniRule"/>
</dbReference>
<dbReference type="GO" id="GO:0003735">
    <property type="term" value="F:structural constituent of ribosome"/>
    <property type="evidence" value="ECO:0007669"/>
    <property type="project" value="InterPro"/>
</dbReference>
<dbReference type="GO" id="GO:0006412">
    <property type="term" value="P:translation"/>
    <property type="evidence" value="ECO:0007669"/>
    <property type="project" value="UniProtKB-UniRule"/>
</dbReference>
<dbReference type="CDD" id="cd00364">
    <property type="entry name" value="Ribosomal_uS17"/>
    <property type="match status" value="1"/>
</dbReference>
<dbReference type="FunFam" id="2.40.50.140:FF:000014">
    <property type="entry name" value="30S ribosomal protein S17"/>
    <property type="match status" value="1"/>
</dbReference>
<dbReference type="Gene3D" id="2.40.50.140">
    <property type="entry name" value="Nucleic acid-binding proteins"/>
    <property type="match status" value="1"/>
</dbReference>
<dbReference type="HAMAP" id="MF_01345_B">
    <property type="entry name" value="Ribosomal_uS17_B"/>
    <property type="match status" value="1"/>
</dbReference>
<dbReference type="InterPro" id="IPR012340">
    <property type="entry name" value="NA-bd_OB-fold"/>
</dbReference>
<dbReference type="InterPro" id="IPR000266">
    <property type="entry name" value="Ribosomal_uS17"/>
</dbReference>
<dbReference type="InterPro" id="IPR019984">
    <property type="entry name" value="Ribosomal_uS17_bact/chlr"/>
</dbReference>
<dbReference type="InterPro" id="IPR019979">
    <property type="entry name" value="Ribosomal_uS17_CS"/>
</dbReference>
<dbReference type="NCBIfam" id="NF004123">
    <property type="entry name" value="PRK05610.1"/>
    <property type="match status" value="1"/>
</dbReference>
<dbReference type="NCBIfam" id="TIGR03635">
    <property type="entry name" value="uS17_bact"/>
    <property type="match status" value="1"/>
</dbReference>
<dbReference type="PANTHER" id="PTHR10744">
    <property type="entry name" value="40S RIBOSOMAL PROTEIN S11 FAMILY MEMBER"/>
    <property type="match status" value="1"/>
</dbReference>
<dbReference type="PANTHER" id="PTHR10744:SF1">
    <property type="entry name" value="SMALL RIBOSOMAL SUBUNIT PROTEIN US17M"/>
    <property type="match status" value="1"/>
</dbReference>
<dbReference type="Pfam" id="PF00366">
    <property type="entry name" value="Ribosomal_S17"/>
    <property type="match status" value="1"/>
</dbReference>
<dbReference type="PRINTS" id="PR00973">
    <property type="entry name" value="RIBOSOMALS17"/>
</dbReference>
<dbReference type="SUPFAM" id="SSF50249">
    <property type="entry name" value="Nucleic acid-binding proteins"/>
    <property type="match status" value="1"/>
</dbReference>
<dbReference type="PROSITE" id="PS00056">
    <property type="entry name" value="RIBOSOMAL_S17"/>
    <property type="match status" value="1"/>
</dbReference>
<reference key="1">
    <citation type="journal article" date="2006" name="PLoS Biol.">
        <title>Metabolic complementarity and genomics of the dual bacterial symbiosis of sharpshooters.</title>
        <authorList>
            <person name="Wu D."/>
            <person name="Daugherty S.C."/>
            <person name="Van Aken S.E."/>
            <person name="Pai G.H."/>
            <person name="Watkins K.L."/>
            <person name="Khouri H."/>
            <person name="Tallon L.J."/>
            <person name="Zaborsky J.M."/>
            <person name="Dunbar H.E."/>
            <person name="Tran P.L."/>
            <person name="Moran N.A."/>
            <person name="Eisen J.A."/>
        </authorList>
    </citation>
    <scope>NUCLEOTIDE SEQUENCE [LARGE SCALE GENOMIC DNA]</scope>
</reference>